<dbReference type="EMBL" id="DN380306">
    <property type="status" value="NOT_ANNOTATED_CDS"/>
    <property type="molecule type" value="mRNA"/>
</dbReference>
<dbReference type="EMBL" id="L08254">
    <property type="status" value="NOT_ANNOTATED_CDS"/>
    <property type="molecule type" value="mRNA"/>
</dbReference>
<dbReference type="PIR" id="PN0622">
    <property type="entry name" value="PN0622"/>
</dbReference>
<dbReference type="RefSeq" id="NP_001300784.1">
    <property type="nucleotide sequence ID" value="NM_001313855.1"/>
</dbReference>
<dbReference type="BMRB" id="P33712"/>
<dbReference type="SMR" id="P33712"/>
<dbReference type="FunCoup" id="P33712">
    <property type="interactions" value="324"/>
</dbReference>
<dbReference type="STRING" id="9615.ENSCAFP00000058639"/>
<dbReference type="PaxDb" id="9612-ENSCAFP00000010834"/>
<dbReference type="Ensembl" id="ENSCAFT00000086858.2">
    <property type="protein sequence ID" value="ENSCAFP00000046181.2"/>
    <property type="gene ID" value="ENSCAFG00000007304.6"/>
</dbReference>
<dbReference type="Ensembl" id="ENSCAFT00030017817.1">
    <property type="protein sequence ID" value="ENSCAFP00030015562.1"/>
    <property type="gene ID" value="ENSCAFG00030009527.1"/>
</dbReference>
<dbReference type="Ensembl" id="ENSCAFT00040031570.1">
    <property type="protein sequence ID" value="ENSCAFP00040027456.1"/>
    <property type="gene ID" value="ENSCAFG00040017054.1"/>
</dbReference>
<dbReference type="Ensembl" id="ENSCAFT00845016544.1">
    <property type="protein sequence ID" value="ENSCAFP00845012869.1"/>
    <property type="gene ID" value="ENSCAFG00845009366.1"/>
</dbReference>
<dbReference type="GeneID" id="610255"/>
<dbReference type="KEGG" id="cfa:610255"/>
<dbReference type="CTD" id="3479"/>
<dbReference type="VEuPathDB" id="HostDB:ENSCAFG00845009366"/>
<dbReference type="VGNC" id="VGNC:41895">
    <property type="gene designation" value="IGF1"/>
</dbReference>
<dbReference type="eggNOG" id="ENOG502RCAB">
    <property type="taxonomic scope" value="Eukaryota"/>
</dbReference>
<dbReference type="GeneTree" id="ENSGT00940000159081"/>
<dbReference type="HOGENOM" id="CLU_123939_0_0_1"/>
<dbReference type="InParanoid" id="P33712"/>
<dbReference type="OMA" id="TLLFKCC"/>
<dbReference type="OrthoDB" id="8936076at2759"/>
<dbReference type="Reactome" id="R-CFA-114608">
    <property type="pathway name" value="Platelet degranulation"/>
</dbReference>
<dbReference type="Reactome" id="R-CFA-2404192">
    <property type="pathway name" value="Signaling by Type 1 Insulin-like Growth Factor 1 Receptor (IGF1R)"/>
</dbReference>
<dbReference type="Reactome" id="R-CFA-2428928">
    <property type="pathway name" value="IRS-related events triggered by IGF1R"/>
</dbReference>
<dbReference type="Reactome" id="R-CFA-2428933">
    <property type="pathway name" value="SHC-related events triggered by IGF1R"/>
</dbReference>
<dbReference type="Reactome" id="R-CFA-381426">
    <property type="pathway name" value="Regulation of Insulin-like Growth Factor (IGF) transport and uptake by Insulin-like Growth Factor Binding Proteins (IGFBPs)"/>
</dbReference>
<dbReference type="Reactome" id="R-CFA-422085">
    <property type="pathway name" value="Synthesis, secretion, and deacylation of Ghrelin"/>
</dbReference>
<dbReference type="Proteomes" id="UP000002254">
    <property type="component" value="Chromosome 15"/>
</dbReference>
<dbReference type="Proteomes" id="UP000694429">
    <property type="component" value="Chromosome 15"/>
</dbReference>
<dbReference type="Proteomes" id="UP000694542">
    <property type="component" value="Chromosome 15"/>
</dbReference>
<dbReference type="Proteomes" id="UP000805418">
    <property type="component" value="Chromosome 15"/>
</dbReference>
<dbReference type="Bgee" id="ENSCAFG00000007304">
    <property type="expression patterns" value="Expressed in bone marrow and 47 other cell types or tissues"/>
</dbReference>
<dbReference type="GO" id="GO:0035867">
    <property type="term" value="C:alphav-beta3 integrin-IGF-1-IGF1R complex"/>
    <property type="evidence" value="ECO:0000250"/>
    <property type="project" value="UniProtKB"/>
</dbReference>
<dbReference type="GO" id="GO:0070382">
    <property type="term" value="C:exocytic vesicle"/>
    <property type="evidence" value="ECO:0000250"/>
    <property type="project" value="UniProtKB"/>
</dbReference>
<dbReference type="GO" id="GO:0005615">
    <property type="term" value="C:extracellular space"/>
    <property type="evidence" value="ECO:0000318"/>
    <property type="project" value="GO_Central"/>
</dbReference>
<dbReference type="GO" id="GO:0008083">
    <property type="term" value="F:growth factor activity"/>
    <property type="evidence" value="ECO:0007669"/>
    <property type="project" value="UniProtKB-KW"/>
</dbReference>
<dbReference type="GO" id="GO:0005179">
    <property type="term" value="F:hormone activity"/>
    <property type="evidence" value="ECO:0000318"/>
    <property type="project" value="GO_Central"/>
</dbReference>
<dbReference type="GO" id="GO:0005159">
    <property type="term" value="F:insulin-like growth factor receptor binding"/>
    <property type="evidence" value="ECO:0000250"/>
    <property type="project" value="UniProtKB"/>
</dbReference>
<dbReference type="GO" id="GO:0008283">
    <property type="term" value="P:cell population proliferation"/>
    <property type="evidence" value="ECO:0000318"/>
    <property type="project" value="GO_Central"/>
</dbReference>
<dbReference type="GO" id="GO:0048009">
    <property type="term" value="P:insulin-like growth factor receptor signaling pathway"/>
    <property type="evidence" value="ECO:0000250"/>
    <property type="project" value="UniProtKB"/>
</dbReference>
<dbReference type="GO" id="GO:0043066">
    <property type="term" value="P:negative regulation of apoptotic process"/>
    <property type="evidence" value="ECO:0000250"/>
    <property type="project" value="UniProtKB"/>
</dbReference>
<dbReference type="GO" id="GO:0090201">
    <property type="term" value="P:negative regulation of release of cytochrome c from mitochondria"/>
    <property type="evidence" value="ECO:0000250"/>
    <property type="project" value="UniProtKB"/>
</dbReference>
<dbReference type="GO" id="GO:0034392">
    <property type="term" value="P:negative regulation of smooth muscle cell apoptotic process"/>
    <property type="evidence" value="ECO:0000250"/>
    <property type="project" value="UniProtKB"/>
</dbReference>
<dbReference type="GO" id="GO:0008284">
    <property type="term" value="P:positive regulation of cell population proliferation"/>
    <property type="evidence" value="ECO:0000250"/>
    <property type="project" value="UniProtKB"/>
</dbReference>
<dbReference type="GO" id="GO:0046326">
    <property type="term" value="P:positive regulation of D-glucose import"/>
    <property type="evidence" value="ECO:0000250"/>
    <property type="project" value="UniProtKB"/>
</dbReference>
<dbReference type="GO" id="GO:0045725">
    <property type="term" value="P:positive regulation of glycogen biosynthetic process"/>
    <property type="evidence" value="ECO:0000250"/>
    <property type="project" value="UniProtKB"/>
</dbReference>
<dbReference type="GO" id="GO:0043410">
    <property type="term" value="P:positive regulation of MAPK cascade"/>
    <property type="evidence" value="ECO:0000250"/>
    <property type="project" value="UniProtKB"/>
</dbReference>
<dbReference type="GO" id="GO:0051897">
    <property type="term" value="P:positive regulation of phosphatidylinositol 3-kinase/protein kinase B signal transduction"/>
    <property type="evidence" value="ECO:0000318"/>
    <property type="project" value="GO_Central"/>
</dbReference>
<dbReference type="CDD" id="cd04368">
    <property type="entry name" value="IlGF"/>
    <property type="match status" value="1"/>
</dbReference>
<dbReference type="FunFam" id="1.10.100.10:FF:000001">
    <property type="entry name" value="insulin-like growth factor I isoform X1"/>
    <property type="match status" value="1"/>
</dbReference>
<dbReference type="Gene3D" id="1.10.100.10">
    <property type="entry name" value="Insulin-like"/>
    <property type="match status" value="1"/>
</dbReference>
<dbReference type="InterPro" id="IPR022341">
    <property type="entry name" value="IGF-I"/>
</dbReference>
<dbReference type="InterPro" id="IPR016179">
    <property type="entry name" value="Insulin-like"/>
</dbReference>
<dbReference type="InterPro" id="IPR022350">
    <property type="entry name" value="Insulin-like_growth_factor"/>
</dbReference>
<dbReference type="InterPro" id="IPR036438">
    <property type="entry name" value="Insulin-like_sf"/>
</dbReference>
<dbReference type="InterPro" id="IPR022353">
    <property type="entry name" value="Insulin_CS"/>
</dbReference>
<dbReference type="InterPro" id="IPR022352">
    <property type="entry name" value="Insulin_family"/>
</dbReference>
<dbReference type="PANTHER" id="PTHR46845">
    <property type="entry name" value="INSULIN-LIKE GROWTH FACTOR I"/>
    <property type="match status" value="1"/>
</dbReference>
<dbReference type="PANTHER" id="PTHR46845:SF1">
    <property type="entry name" value="INSULIN-LIKE GROWTH FACTOR I"/>
    <property type="match status" value="1"/>
</dbReference>
<dbReference type="Pfam" id="PF00049">
    <property type="entry name" value="Insulin"/>
    <property type="match status" value="1"/>
</dbReference>
<dbReference type="PRINTS" id="PR02002">
    <property type="entry name" value="INSLNLIKEGF"/>
</dbReference>
<dbReference type="PRINTS" id="PR02005">
    <property type="entry name" value="INSLNLIKEGF1"/>
</dbReference>
<dbReference type="PRINTS" id="PR00276">
    <property type="entry name" value="INSULINFAMLY"/>
</dbReference>
<dbReference type="SMART" id="SM00078">
    <property type="entry name" value="IlGF"/>
    <property type="match status" value="1"/>
</dbReference>
<dbReference type="SUPFAM" id="SSF56994">
    <property type="entry name" value="Insulin-like"/>
    <property type="match status" value="1"/>
</dbReference>
<dbReference type="PROSITE" id="PS00262">
    <property type="entry name" value="INSULIN"/>
    <property type="match status" value="1"/>
</dbReference>
<feature type="signal peptide" evidence="5">
    <location>
        <begin position="1"/>
        <end status="unknown"/>
    </location>
</feature>
<feature type="propeptide" id="PRO_0000330685" evidence="1">
    <location>
        <begin status="unknown"/>
        <end position="48"/>
    </location>
</feature>
<feature type="chain" id="PRO_0000015650" description="Insulin-like growth factor 1">
    <location>
        <begin position="49"/>
        <end position="118"/>
    </location>
</feature>
<feature type="propeptide" id="PRO_0000015651" description="E peptide">
    <location>
        <begin position="119"/>
        <end position="153"/>
    </location>
</feature>
<feature type="region of interest" description="B">
    <location>
        <begin position="49"/>
        <end position="77"/>
    </location>
</feature>
<feature type="region of interest" description="C">
    <location>
        <begin position="78"/>
        <end position="89"/>
    </location>
</feature>
<feature type="region of interest" description="A">
    <location>
        <begin position="90"/>
        <end position="110"/>
    </location>
</feature>
<feature type="region of interest" description="D">
    <location>
        <begin position="111"/>
        <end position="118"/>
    </location>
</feature>
<feature type="region of interest" description="Disordered" evidence="6">
    <location>
        <begin position="120"/>
        <end position="153"/>
    </location>
</feature>
<feature type="compositionally biased region" description="Basic and acidic residues" evidence="6">
    <location>
        <begin position="125"/>
        <end position="138"/>
    </location>
</feature>
<feature type="compositionally biased region" description="Polar residues" evidence="6">
    <location>
        <begin position="142"/>
        <end position="153"/>
    </location>
</feature>
<feature type="disulfide bond" evidence="3">
    <location>
        <begin position="54"/>
        <end position="96"/>
    </location>
</feature>
<feature type="disulfide bond" evidence="3">
    <location>
        <begin position="66"/>
        <end position="109"/>
    </location>
</feature>
<feature type="disulfide bond" evidence="3">
    <location>
        <begin position="95"/>
        <end position="100"/>
    </location>
</feature>
<feature type="sequence conflict" description="In Ref. 2; L08254." evidence="9" ref="2">
    <original>NYRM</original>
    <variation>TY</variation>
    <location>
        <begin position="150"/>
        <end position="153"/>
    </location>
</feature>
<comment type="function">
    <text evidence="2 3 4">The insulin-like growth factors, isolated from plasma, are structurally and functionally related to insulin but have a much higher growth-promoting activity. May be a physiological regulator of [1-14C]-2-deoxy-D-glucose (2DG) transport and glycogen synthesis in osteoblasts. Stimulates glucose transport in bone-derived osteoblastic (PyMS) cells and is effective at much lower concentrations than insulin, not only regarding glycogen and DNA synthesis but also with regard to enhancing glucose uptake. May play a role in synapse maturation. Ca(2+)-dependent exocytosis of IGF1 is required for sensory perception of smell in the olfactory bulb. Acts as a ligand for IGF1R. Binds to the alpha subunit of IGF1R, leading to the activation of the intrinsic tyrosine kinase activity which autophosphorylates tyrosine residues in the beta subunit thus initiating a cascade of down-stream signaling events leading to activation of the PI3K-AKT/PKB and the Ras-MAPK pathways. Binds to integrins ITGAV:ITGB3 and ITGA6:ITGB4. Its binding to integrins and subsequent ternary complex formation with integrins and IGFR1 are essential for IGF1 signaling. Induces the phosphorylation and activation of IGFR1, MAPK3/ERK1, MAPK1/ERK2 and AKT1 (By similarity). As part of the MAPK/ERK signaling pathway, acts as a negative regulator of apoptosis in cardiomyocytes via promotion of STUB1/CHIP-mediated ubiquitination and degradation of ICER-type isoforms of CREM (By similarity).</text>
</comment>
<comment type="subunit">
    <text evidence="3">Forms a ternary complex with IGFR1 and ITGAV:ITGB3. Forms a ternary complex with IGFR1 and ITGA6:ITGB4. Forms a ternary complex with IGFBP3 and ALS.</text>
</comment>
<comment type="subcellular location">
    <subcellularLocation>
        <location evidence="2">Secreted</location>
    </subcellularLocation>
</comment>
<comment type="polymorphism">
    <text evidence="7">The domestic dog exhibits greater diversity in body size than any other terrestrial vertebrate. A major quantitative trait locus (QTL) on chromosome 15 influences size variation within a single breed. In particular, a single-nucleotide polymorphism haplotype in IGF1 (synonymous SNP in exon 3) is common to all small breeds (less than 9 kg) and nearly absent from giant breeds (more than 30 kg), suggesting that the same causal sequence variant is a major contributor to body size in all small dogs.</text>
</comment>
<comment type="similarity">
    <text evidence="9">Belongs to the insulin family.</text>
</comment>
<comment type="online information" name="Protein Spotlight">
    <link uri="https://www.proteinspotlight.org/back_issues/092"/>
    <text>A dog's life - Issue 92 of March 2008</text>
</comment>
<reference key="1">
    <citation type="submission" date="2005-03" db="EMBL/GenBank/DDBJ databases">
        <authorList>
            <person name="Staten N.R."/>
        </authorList>
    </citation>
    <scope>NUCLEOTIDE SEQUENCE [LARGE SCALE MRNA]</scope>
    <source>
        <tissue>Synovium</tissue>
    </source>
</reference>
<reference key="2">
    <citation type="journal article" date="1993" name="Gene">
        <title>Sequence of a cDNA encoding dog insulin-like growth factor I.</title>
        <authorList>
            <person name="Delafontaine P."/>
            <person name="Lou H."/>
            <person name="Harrison D.G."/>
            <person name="Bernstein K.E."/>
        </authorList>
    </citation>
    <scope>NUCLEOTIDE SEQUENCE [MRNA] OF 30-151</scope>
</reference>
<reference key="3">
    <citation type="journal article" date="2007" name="Science">
        <title>A single IGF1 allele is a major determinant of small size in dogs.</title>
        <authorList>
            <person name="Sutter N.B."/>
            <person name="Bustamante C.D."/>
            <person name="Chase K."/>
            <person name="Gray M.M."/>
            <person name="Zhao K."/>
            <person name="Zhu L."/>
            <person name="Padhukasahasram B."/>
            <person name="Karlins E."/>
            <person name="Davis S."/>
            <person name="Jones P.G."/>
            <person name="Quignon P."/>
            <person name="Johnson G.S."/>
            <person name="Parker H.G."/>
            <person name="Fretwell N."/>
            <person name="Mosher D.S."/>
            <person name="Lawler D.F."/>
            <person name="Satyaraj E."/>
            <person name="Nordborg M."/>
            <person name="Lark K.G."/>
            <person name="Wayne R.K."/>
            <person name="Ostrander E.A."/>
        </authorList>
    </citation>
    <scope>POLYMORPHISM</scope>
</reference>
<gene>
    <name evidence="3" type="primary">IGF1</name>
    <name evidence="3" type="synonym">IGF-1</name>
    <name type="synonym">IGFIA</name>
</gene>
<sequence length="153" mass="16970">MGKISSLPTQLFKCCFCDFLKVKMHTVSSSHLFYLALCLLTFPSPATAGPETLCGAELVDALQFVCGDRGFYFNKPTGYGSSSRRAPQTGIVDECCFRSCDLRRLEMYCAPLKPAKSARSVRAQRHTDMPKAQKEVHLKNASRGSAGNKNYRM</sequence>
<proteinExistence type="evidence at transcript level"/>
<protein>
    <recommendedName>
        <fullName evidence="3">Insulin-like growth factor 1</fullName>
    </recommendedName>
    <alternativeName>
        <fullName evidence="8">Insulin-like growth factor I</fullName>
        <shortName evidence="8">IGF-I</shortName>
    </alternativeName>
    <alternativeName>
        <fullName>Somatomedin</fullName>
    </alternativeName>
</protein>
<organism>
    <name type="scientific">Canis lupus familiaris</name>
    <name type="common">Dog</name>
    <name type="synonym">Canis familiaris</name>
    <dbReference type="NCBI Taxonomy" id="9615"/>
    <lineage>
        <taxon>Eukaryota</taxon>
        <taxon>Metazoa</taxon>
        <taxon>Chordata</taxon>
        <taxon>Craniata</taxon>
        <taxon>Vertebrata</taxon>
        <taxon>Euteleostomi</taxon>
        <taxon>Mammalia</taxon>
        <taxon>Eutheria</taxon>
        <taxon>Laurasiatheria</taxon>
        <taxon>Carnivora</taxon>
        <taxon>Caniformia</taxon>
        <taxon>Canidae</taxon>
        <taxon>Canis</taxon>
    </lineage>
</organism>
<accession>P33712</accession>
<evidence type="ECO:0000250" key="1"/>
<evidence type="ECO:0000250" key="2">
    <source>
        <dbReference type="UniProtKB" id="P05017"/>
    </source>
</evidence>
<evidence type="ECO:0000250" key="3">
    <source>
        <dbReference type="UniProtKB" id="P05019"/>
    </source>
</evidence>
<evidence type="ECO:0000250" key="4">
    <source>
        <dbReference type="UniProtKB" id="P08025"/>
    </source>
</evidence>
<evidence type="ECO:0000255" key="5"/>
<evidence type="ECO:0000256" key="6">
    <source>
        <dbReference type="SAM" id="MobiDB-lite"/>
    </source>
</evidence>
<evidence type="ECO:0000269" key="7">
    <source>
    </source>
</evidence>
<evidence type="ECO:0000303" key="8">
    <source>
    </source>
</evidence>
<evidence type="ECO:0000305" key="9"/>
<keyword id="KW-1015">Disulfide bond</keyword>
<keyword id="KW-0339">Growth factor</keyword>
<keyword id="KW-1185">Reference proteome</keyword>
<keyword id="KW-0964">Secreted</keyword>
<keyword id="KW-0732">Signal</keyword>
<name>IGF1_CANLF</name>